<feature type="chain" id="PRO_0000457976" description="Immunity-related GTPase family M protein 3">
    <location>
        <begin position="1"/>
        <end position="423"/>
    </location>
</feature>
<feature type="domain" description="IRG-type G" evidence="3">
    <location>
        <begin position="83"/>
        <end position="260"/>
    </location>
</feature>
<feature type="binding site" evidence="2">
    <location>
        <begin position="92"/>
        <end position="99"/>
    </location>
    <ligand>
        <name>GTP</name>
        <dbReference type="ChEBI" id="CHEBI:37565"/>
    </ligand>
</feature>
<feature type="binding site" evidence="2">
    <location>
        <begin position="117"/>
        <end position="121"/>
    </location>
    <ligand>
        <name>GTP</name>
        <dbReference type="ChEBI" id="CHEBI:37565"/>
    </ligand>
</feature>
<feature type="binding site" evidence="2">
    <location>
        <begin position="200"/>
        <end position="202"/>
    </location>
    <ligand>
        <name>GTP</name>
        <dbReference type="ChEBI" id="CHEBI:37565"/>
    </ligand>
</feature>
<feature type="mutagenesis site" description="Abolished GTP-binding leading tand GTPase activity without affecting localizatiom to the endoplasmic reticulum." evidence="14">
    <original>S</original>
    <variation>N</variation>
    <location>
        <position position="98"/>
    </location>
</feature>
<feature type="sequence conflict" description="In Ref. 1; BAC40277 and 3; AAI32558/AAI38608." evidence="17" ref="1 3">
    <original>D</original>
    <variation>E</variation>
    <location>
        <position position="113"/>
    </location>
</feature>
<feature type="sequence conflict" description="In Ref. 1; BAC40277 and 3; AAI32558/AAI38608." evidence="17" ref="1 3">
    <original>L</original>
    <variation>V</variation>
    <location>
        <position position="321"/>
    </location>
</feature>
<feature type="sequence conflict" description="In Ref. 1; BAC40277 and 3; AAI32558/AAI38608." evidence="17" ref="1 3">
    <original>L</original>
    <variation>V</variation>
    <location>
        <position position="372"/>
    </location>
</feature>
<reference key="1">
    <citation type="journal article" date="2005" name="Science">
        <title>The transcriptional landscape of the mammalian genome.</title>
        <authorList>
            <person name="Carninci P."/>
            <person name="Kasukawa T."/>
            <person name="Katayama S."/>
            <person name="Gough J."/>
            <person name="Frith M.C."/>
            <person name="Maeda N."/>
            <person name="Oyama R."/>
            <person name="Ravasi T."/>
            <person name="Lenhard B."/>
            <person name="Wells C."/>
            <person name="Kodzius R."/>
            <person name="Shimokawa K."/>
            <person name="Bajic V.B."/>
            <person name="Brenner S.E."/>
            <person name="Batalov S."/>
            <person name="Forrest A.R."/>
            <person name="Zavolan M."/>
            <person name="Davis M.J."/>
            <person name="Wilming L.G."/>
            <person name="Aidinis V."/>
            <person name="Allen J.E."/>
            <person name="Ambesi-Impiombato A."/>
            <person name="Apweiler R."/>
            <person name="Aturaliya R.N."/>
            <person name="Bailey T.L."/>
            <person name="Bansal M."/>
            <person name="Baxter L."/>
            <person name="Beisel K.W."/>
            <person name="Bersano T."/>
            <person name="Bono H."/>
            <person name="Chalk A.M."/>
            <person name="Chiu K.P."/>
            <person name="Choudhary V."/>
            <person name="Christoffels A."/>
            <person name="Clutterbuck D.R."/>
            <person name="Crowe M.L."/>
            <person name="Dalla E."/>
            <person name="Dalrymple B.P."/>
            <person name="de Bono B."/>
            <person name="Della Gatta G."/>
            <person name="di Bernardo D."/>
            <person name="Down T."/>
            <person name="Engstrom P."/>
            <person name="Fagiolini M."/>
            <person name="Faulkner G."/>
            <person name="Fletcher C.F."/>
            <person name="Fukushima T."/>
            <person name="Furuno M."/>
            <person name="Futaki S."/>
            <person name="Gariboldi M."/>
            <person name="Georgii-Hemming P."/>
            <person name="Gingeras T.R."/>
            <person name="Gojobori T."/>
            <person name="Green R.E."/>
            <person name="Gustincich S."/>
            <person name="Harbers M."/>
            <person name="Hayashi Y."/>
            <person name="Hensch T.K."/>
            <person name="Hirokawa N."/>
            <person name="Hill D."/>
            <person name="Huminiecki L."/>
            <person name="Iacono M."/>
            <person name="Ikeo K."/>
            <person name="Iwama A."/>
            <person name="Ishikawa T."/>
            <person name="Jakt M."/>
            <person name="Kanapin A."/>
            <person name="Katoh M."/>
            <person name="Kawasawa Y."/>
            <person name="Kelso J."/>
            <person name="Kitamura H."/>
            <person name="Kitano H."/>
            <person name="Kollias G."/>
            <person name="Krishnan S.P."/>
            <person name="Kruger A."/>
            <person name="Kummerfeld S.K."/>
            <person name="Kurochkin I.V."/>
            <person name="Lareau L.F."/>
            <person name="Lazarevic D."/>
            <person name="Lipovich L."/>
            <person name="Liu J."/>
            <person name="Liuni S."/>
            <person name="McWilliam S."/>
            <person name="Madan Babu M."/>
            <person name="Madera M."/>
            <person name="Marchionni L."/>
            <person name="Matsuda H."/>
            <person name="Matsuzawa S."/>
            <person name="Miki H."/>
            <person name="Mignone F."/>
            <person name="Miyake S."/>
            <person name="Morris K."/>
            <person name="Mottagui-Tabar S."/>
            <person name="Mulder N."/>
            <person name="Nakano N."/>
            <person name="Nakauchi H."/>
            <person name="Ng P."/>
            <person name="Nilsson R."/>
            <person name="Nishiguchi S."/>
            <person name="Nishikawa S."/>
            <person name="Nori F."/>
            <person name="Ohara O."/>
            <person name="Okazaki Y."/>
            <person name="Orlando V."/>
            <person name="Pang K.C."/>
            <person name="Pavan W.J."/>
            <person name="Pavesi G."/>
            <person name="Pesole G."/>
            <person name="Petrovsky N."/>
            <person name="Piazza S."/>
            <person name="Reed J."/>
            <person name="Reid J.F."/>
            <person name="Ring B.Z."/>
            <person name="Ringwald M."/>
            <person name="Rost B."/>
            <person name="Ruan Y."/>
            <person name="Salzberg S.L."/>
            <person name="Sandelin A."/>
            <person name="Schneider C."/>
            <person name="Schoenbach C."/>
            <person name="Sekiguchi K."/>
            <person name="Semple C.A."/>
            <person name="Seno S."/>
            <person name="Sessa L."/>
            <person name="Sheng Y."/>
            <person name="Shibata Y."/>
            <person name="Shimada H."/>
            <person name="Shimada K."/>
            <person name="Silva D."/>
            <person name="Sinclair B."/>
            <person name="Sperling S."/>
            <person name="Stupka E."/>
            <person name="Sugiura K."/>
            <person name="Sultana R."/>
            <person name="Takenaka Y."/>
            <person name="Taki K."/>
            <person name="Tammoja K."/>
            <person name="Tan S.L."/>
            <person name="Tang S."/>
            <person name="Taylor M.S."/>
            <person name="Tegner J."/>
            <person name="Teichmann S.A."/>
            <person name="Ueda H.R."/>
            <person name="van Nimwegen E."/>
            <person name="Verardo R."/>
            <person name="Wei C.L."/>
            <person name="Yagi K."/>
            <person name="Yamanishi H."/>
            <person name="Zabarovsky E."/>
            <person name="Zhu S."/>
            <person name="Zimmer A."/>
            <person name="Hide W."/>
            <person name="Bult C."/>
            <person name="Grimmond S.M."/>
            <person name="Teasdale R.D."/>
            <person name="Liu E.T."/>
            <person name="Brusic V."/>
            <person name="Quackenbush J."/>
            <person name="Wahlestedt C."/>
            <person name="Mattick J.S."/>
            <person name="Hume D.A."/>
            <person name="Kai C."/>
            <person name="Sasaki D."/>
            <person name="Tomaru Y."/>
            <person name="Fukuda S."/>
            <person name="Kanamori-Katayama M."/>
            <person name="Suzuki M."/>
            <person name="Aoki J."/>
            <person name="Arakawa T."/>
            <person name="Iida J."/>
            <person name="Imamura K."/>
            <person name="Itoh M."/>
            <person name="Kato T."/>
            <person name="Kawaji H."/>
            <person name="Kawagashira N."/>
            <person name="Kawashima T."/>
            <person name="Kojima M."/>
            <person name="Kondo S."/>
            <person name="Konno H."/>
            <person name="Nakano K."/>
            <person name="Ninomiya N."/>
            <person name="Nishio T."/>
            <person name="Okada M."/>
            <person name="Plessy C."/>
            <person name="Shibata K."/>
            <person name="Shiraki T."/>
            <person name="Suzuki S."/>
            <person name="Tagami M."/>
            <person name="Waki K."/>
            <person name="Watahiki A."/>
            <person name="Okamura-Oho Y."/>
            <person name="Suzuki H."/>
            <person name="Kawai J."/>
            <person name="Hayashizaki Y."/>
        </authorList>
    </citation>
    <scope>NUCLEOTIDE SEQUENCE [LARGE SCALE MRNA]</scope>
    <source>
        <strain>C57BL/6J</strain>
        <strain>NOD</strain>
        <tissue>Bone marrow</tissue>
        <tissue>Kidney</tissue>
        <tissue>Thymus</tissue>
    </source>
</reference>
<reference key="2">
    <citation type="journal article" date="2009" name="PLoS Biol.">
        <title>Lineage-specific biology revealed by a finished genome assembly of the mouse.</title>
        <authorList>
            <person name="Church D.M."/>
            <person name="Goodstadt L."/>
            <person name="Hillier L.W."/>
            <person name="Zody M.C."/>
            <person name="Goldstein S."/>
            <person name="She X."/>
            <person name="Bult C.J."/>
            <person name="Agarwala R."/>
            <person name="Cherry J.L."/>
            <person name="DiCuccio M."/>
            <person name="Hlavina W."/>
            <person name="Kapustin Y."/>
            <person name="Meric P."/>
            <person name="Maglott D."/>
            <person name="Birtle Z."/>
            <person name="Marques A.C."/>
            <person name="Graves T."/>
            <person name="Zhou S."/>
            <person name="Teague B."/>
            <person name="Potamousis K."/>
            <person name="Churas C."/>
            <person name="Place M."/>
            <person name="Herschleb J."/>
            <person name="Runnheim R."/>
            <person name="Forrest D."/>
            <person name="Amos-Landgraf J."/>
            <person name="Schwartz D.C."/>
            <person name="Cheng Z."/>
            <person name="Lindblad-Toh K."/>
            <person name="Eichler E.E."/>
            <person name="Ponting C.P."/>
        </authorList>
    </citation>
    <scope>NUCLEOTIDE SEQUENCE [LARGE SCALE GENOMIC DNA]</scope>
    <source>
        <strain>C57BL/6J</strain>
    </source>
</reference>
<reference key="3">
    <citation type="journal article" date="2004" name="Genome Res.">
        <title>The status, quality, and expansion of the NIH full-length cDNA project: the Mammalian Gene Collection (MGC).</title>
        <authorList>
            <consortium name="The MGC Project Team"/>
        </authorList>
    </citation>
    <scope>NUCLEOTIDE SEQUENCE [LARGE SCALE MRNA]</scope>
    <source>
        <tissue>Brain</tissue>
    </source>
</reference>
<reference key="4">
    <citation type="journal article" date="2012" name="Funct. Integr. Genomics">
        <title>Comparative genomic analysis of eutherian interferon-gamma-inducible GTPases.</title>
        <authorList>
            <person name="Premzl M."/>
        </authorList>
    </citation>
    <scope>IDENTIFICATION</scope>
    <scope>GENOMIC ANALYSIS</scope>
</reference>
<reference key="5">
    <citation type="journal article" date="1996" name="J. Biol. Chem.">
        <title>Identification of a novel GTPase, the inducibly expressed GTPase, that accumulates in response to interferon gamma.</title>
        <authorList>
            <person name="Taylor G.A."/>
            <person name="Jeffers M."/>
            <person name="Largaespada D.A."/>
            <person name="Jenkins N.A."/>
            <person name="Copeland N.G."/>
            <person name="Vande Woude G.F."/>
        </authorList>
    </citation>
    <scope>CATALYTIC ACTIVITY</scope>
    <scope>INDUCTION</scope>
</reference>
<reference key="6">
    <citation type="journal article" date="1997" name="J. Biol. Chem.">
        <title>The inducibly expressed GTPase localizes to the endoplasmic reticulum, independently of GTP binding.</title>
        <authorList>
            <person name="Taylor G.A."/>
            <person name="Stauber R."/>
            <person name="Rulong S."/>
            <person name="Hudson E."/>
            <person name="Pei V."/>
            <person name="Pavlakis G.N."/>
            <person name="Resau J.H."/>
            <person name="Vande Woude G.F."/>
        </authorList>
    </citation>
    <scope>CATALYTIC ACTIVITY</scope>
    <scope>SUBCELLULAR LOCATION</scope>
    <scope>MUTAGENESIS OF SER-98</scope>
</reference>
<reference key="7">
    <citation type="journal article" date="2000" name="Proc. Natl. Acad. Sci. U.S.A.">
        <title>Pathogen-specific loss of host resistance in mice lacking the IFN-gamma-inducible gene IGTP.</title>
        <authorList>
            <person name="Taylor G.A."/>
            <person name="Collazo C.M."/>
            <person name="Yap G.S."/>
            <person name="Nguyen K."/>
            <person name="Gregorio T.A."/>
            <person name="Taylor L.S."/>
            <person name="Eagleson B."/>
            <person name="Secrest L."/>
            <person name="Southon E.A."/>
            <person name="Reid S.W."/>
            <person name="Tessarollo L."/>
            <person name="Bray M."/>
            <person name="McVicar D.W."/>
            <person name="Komschlies K.L."/>
            <person name="Young H.A."/>
            <person name="Biron C.A."/>
            <person name="Sher A."/>
            <person name="Vande Woude G.F."/>
        </authorList>
    </citation>
    <scope>FUNCTION</scope>
    <scope>DISRUPTION PHENOTYPE</scope>
</reference>
<reference key="8">
    <citation type="journal article" date="2001" name="Infect. Immun.">
        <title>Gamma interferon-induced inhibition of Toxoplasma gondii in astrocytes is mediated by IGTP.</title>
        <authorList>
            <person name="Halonen S.K."/>
            <person name="Taylor G.A."/>
            <person name="Weiss L.M."/>
        </authorList>
    </citation>
    <scope>FUNCTION</scope>
    <scope>DISRUPTION PHENOTYPE</scope>
    <scope>INDUCTION</scope>
</reference>
<reference key="9">
    <citation type="journal article" date="2002" name="Infect. Immun.">
        <title>The function of gamma interferon-inducible GTP-binding protein IGTP in host resistance to Toxoplasma gondii is Stat1 dependent and requires expression in both hematopoietic and nonhematopoietic cellular compartments.</title>
        <authorList>
            <person name="Collazo C.M."/>
            <person name="Yap G.S."/>
            <person name="Hieny S."/>
            <person name="Caspar P."/>
            <person name="Feng C.G."/>
            <person name="Taylor G.A."/>
            <person name="Sher A."/>
        </authorList>
    </citation>
    <scope>FUNCTION</scope>
    <scope>INDUCTION</scope>
</reference>
<reference key="10">
    <citation type="journal article" date="2006" name="J. Exp. Med.">
        <title>Vacuolar and plasma membrane stripping and autophagic elimination of Toxoplasma gondii in primed effector macrophages.</title>
        <authorList>
            <person name="Ling Y.M."/>
            <person name="Shaw M.H."/>
            <person name="Ayala C."/>
            <person name="Coppens I."/>
            <person name="Taylor G.A."/>
            <person name="Ferguson D.J."/>
            <person name="Yap G.S."/>
        </authorList>
    </citation>
    <scope>FUNCTION</scope>
    <scope>DISRUPTION PHENOTYPE</scope>
</reference>
<reference key="11">
    <citation type="journal article" date="2008" name="Infect. Immun.">
        <title>The gamma interferon (IFN-gamma)-inducible GTP-binding protein IGTP is necessary for toxoplasma vacuolar disruption and induces parasite egression in IFN-gamma-stimulated astrocytes.</title>
        <authorList>
            <person name="Melzer T."/>
            <person name="Duffy A."/>
            <person name="Weiss L.M."/>
            <person name="Halonen S.K."/>
        </authorList>
    </citation>
    <scope>FUNCTION</scope>
    <scope>SUBCELLULAR LOCATION</scope>
</reference>
<reference key="12">
    <citation type="journal article" date="2012" name="Cell. Microbiol.">
        <title>The immunity-related GTPase Irgm3 relieves endoplasmic reticulum stress response during coxsackievirus B3 infection via a PI3K/Akt dependent pathway.</title>
        <authorList>
            <person name="Liu Z."/>
            <person name="Zhang H.M."/>
            <person name="Yuan J."/>
            <person name="Ye X."/>
            <person name="Taylor G.A."/>
            <person name="Yang D."/>
        </authorList>
    </citation>
    <scope>FUNCTION</scope>
</reference>
<reference key="13">
    <citation type="journal article" date="2015" name="Infect. Immun.">
        <title>IRGM3 contributes to immunopathology and is required for differentiation of antigen-specific effector CD8+ T cells in experimental cerebral malaria.</title>
        <authorList>
            <person name="Guo J."/>
            <person name="McQuillan J.A."/>
            <person name="Yau B."/>
            <person name="Tullo G.S."/>
            <person name="Long C.A."/>
            <person name="Bertolino P."/>
            <person name="Roediger B."/>
            <person name="Weninger W."/>
            <person name="Taylor G.A."/>
            <person name="Hunt N.H."/>
            <person name="Ball H.J."/>
            <person name="Mitchell A.J."/>
        </authorList>
    </citation>
    <scope>FUNCTION</scope>
</reference>
<reference key="14">
    <citation type="journal article" date="2013" name="PLoS Pathog.">
        <title>IRG and GBP host resistance factors target aberrant, 'non-self' vacuoles characterized by the missing of 'self' IRGM proteins.</title>
        <authorList>
            <person name="Haldar A.K."/>
            <person name="Saka H.A."/>
            <person name="Piro A.S."/>
            <person name="Dunn J.D."/>
            <person name="Henry S.C."/>
            <person name="Taylor G.A."/>
            <person name="Frickel E.M."/>
            <person name="Valdivia R.H."/>
            <person name="Coers J."/>
        </authorList>
    </citation>
    <scope>SUBCELLULAR LOCATION</scope>
</reference>
<reference key="15">
    <citation type="journal article" date="2023" name="Infect. Immun.">
        <title>Differential requirement for IRGM proteins during Tuberculosis infection in mice.</title>
        <authorList>
            <person name="Wilburn K.M."/>
            <person name="Meade R.K."/>
            <person name="Heckenberg E.M."/>
            <person name="Dockterman J."/>
            <person name="Coers J."/>
            <person name="Sassetti C.M."/>
            <person name="Olive A.J."/>
            <person name="Smith C.M."/>
        </authorList>
    </citation>
    <scope>DISRUPTION PHENOTYPE</scope>
</reference>
<sequence length="423" mass="48494">MDLVTKLPQNIWKTFTLFINMANYLKRLISPWSKSMTAGESLYSSQNSSSPEVIEDIGKAVTEGNLQKVIGIVKDEIQSKSRYRVKIAVTGDSGNGMSSFINALRFIGHEEEDSAPTGVVRTTKKPACYSSDSHFPYVELWDLPGLGATAQSVESYLEEMQISTFDLIIIVASEQFSSNHVKLAITMQRMRKRFYVVWTKLDRDLSTSTFPEPQLLQSIQRNIRENLQQAQVRDPPLFLISCFSPSFHDFPELRNTLQKDIFSIRYRDPLEIISQVCDKCISNKAFSLKEDQMLMKDLEAAVSSEDDTANLERGLQTYQKLFGVDDGSLQQVARSTGRLEMGSRALQFQDLIKMDRRLELMMCFAVNKFLRLLESSWWYGLWNVVTRYFRHQRHKLVIEIVAENTKTSLRKALKDSVLPPEIH</sequence>
<keyword id="KW-0072">Autophagy</keyword>
<keyword id="KW-0968">Cytoplasmic vesicle</keyword>
<keyword id="KW-0256">Endoplasmic reticulum</keyword>
<keyword id="KW-0342">GTP-binding</keyword>
<keyword id="KW-0378">Hydrolase</keyword>
<keyword id="KW-0391">Immunity</keyword>
<keyword id="KW-0399">Innate immunity</keyword>
<keyword id="KW-0551">Lipid droplet</keyword>
<keyword id="KW-0472">Membrane</keyword>
<keyword id="KW-0547">Nucleotide-binding</keyword>
<keyword id="KW-1185">Reference proteome</keyword>
<name>IRGM3_MOUSE</name>
<protein>
    <recommendedName>
        <fullName evidence="17">Immunity-related GTPase family M protein 3</fullName>
        <ecNumber evidence="14">3.6.5.-</ecNumber>
    </recommendedName>
    <alternativeName>
        <fullName evidence="15">Interferon gamma-induced GTPase</fullName>
    </alternativeName>
</protein>
<comment type="function">
    <text evidence="1 4 5 6 7 8 9 11">Immunity-related GTPase that plays important roles in host resistance to acute infection by protozoan, such as Toxoplasma gondii and Leishmania major (PubMed:10639151, PubMed:11500431, PubMed:12438372, PubMed:16940170, PubMed:18765738). Acts as a dynamin-like protein that binds to intracellular membranes and promotes remodeling and trafficking of those membranes (By similarity). Acts predominantly to restrict acute protozoan infection: expression is required in both hematopoietic and non-hematopoietic cellular compartments and is dependent on Stat1 (PubMed:12438372). Only plays a partial role in the control of latent Toxoplasma infection (PubMed:12438372). Involved in the clearance of acute protozoan infections by regulating autophagy, possibly by promoting the fusion of phagosomes with lysosomes for efficient degradation of vacuoles containing parasites (PubMed:16940170). Probably involved in membrane disruption of parasite-containing vacuoles (PubMed:18765738). In addition to its role in resistance to acute infection by protozoan, also acts as a negative regulator of the integrated stress response (ISR) following coxsackievirus B3 infection (PubMed:21981022). Promotes differentiation of activated CD8(+) T-cells (PubMed:25644000).</text>
</comment>
<comment type="catalytic activity">
    <reaction evidence="13 14">
        <text>GTP + H2O = GDP + phosphate + H(+)</text>
        <dbReference type="Rhea" id="RHEA:19669"/>
        <dbReference type="ChEBI" id="CHEBI:15377"/>
        <dbReference type="ChEBI" id="CHEBI:15378"/>
        <dbReference type="ChEBI" id="CHEBI:37565"/>
        <dbReference type="ChEBI" id="CHEBI:43474"/>
        <dbReference type="ChEBI" id="CHEBI:58189"/>
    </reaction>
    <physiologicalReaction direction="left-to-right" evidence="13 14">
        <dbReference type="Rhea" id="RHEA:19670"/>
    </physiologicalReaction>
</comment>
<comment type="subcellular location">
    <subcellularLocation>
        <location evidence="8 14">Endoplasmic reticulum</location>
    </subcellularLocation>
    <subcellularLocation>
        <location evidence="8 10">Cytoplasmic vesicle membrane</location>
    </subcellularLocation>
    <subcellularLocation>
        <location evidence="10">Lipid droplet</location>
    </subcellularLocation>
    <text evidence="8 10">Delivered to the parasitophorous vacuole via the cell endoplasmic reticulum early after invasion (PubMed:18765738). It then condenses into vesicle-like structures on the vacuole just prior to parasitophorous vacuole disruption (PubMed:18765738). Mainly associates with lipid droplets and 'self' cytoplasmic vacuoles, while it only weakly coats 'non-self' pathogen-containing vacuoles (PubMed:23785284).</text>
</comment>
<comment type="induction">
    <text evidence="5 6 13">Expression is induced in response to IFNG/IFN-gamma (PubMed:11500431, PubMed:12438372, PubMed:8702776). Expressed in response to Toxoplasma gondii infection (PubMed:12438372).</text>
</comment>
<comment type="disruption phenotype">
    <text evidence="4 5 7 12">Mice do not show obvious abnormalities, but are more susceptible to infection by Toxoplasma gondii (PubMed:10639151, PubMed:11500431). In contrast, normal clearance of Listeria monocytogenes and cytomegalovirus infections is observed (PubMed:10639151). Macrophages from knockout mice show impaired envelopment of parasites in autophagosome-like vacuoles (PubMed:16940170). Mice lacking both Irgm1 and Igtp/Irgm3 display resistance to Mycobacterium tuberculosis infection compared to Irgm1 mice that are highly susceptible to infection (PubMed:36629440). Mice lacking Irgm1, Irgm2 and Igtp/Irgm3 (panIrgm mice) show resistance against M.tuberculosis one month post-infection; then, panIrgm mice display higher bacterial burden and altered cytokine during late stage of infection, leading to increased mortality (PubMed:36629440).</text>
</comment>
<comment type="similarity">
    <text evidence="3">Belongs to the TRAFAC class dynamin-like GTPase superfamily. IRG family.</text>
</comment>
<comment type="sequence caution" evidence="17">
    <conflict type="erroneous gene model prediction">
        <sequence resource="EMBL-CDS" id="CBY65995"/>
    </conflict>
</comment>
<accession>Q9DCE9</accession>
<accession>J7PDL1</accession>
<accession>Q8C2M8</accession>
<proteinExistence type="evidence at protein level"/>
<organism>
    <name type="scientific">Mus musculus</name>
    <name type="common">Mouse</name>
    <dbReference type="NCBI Taxonomy" id="10090"/>
    <lineage>
        <taxon>Eukaryota</taxon>
        <taxon>Metazoa</taxon>
        <taxon>Chordata</taxon>
        <taxon>Craniata</taxon>
        <taxon>Vertebrata</taxon>
        <taxon>Euteleostomi</taxon>
        <taxon>Mammalia</taxon>
        <taxon>Eutheria</taxon>
        <taxon>Euarchontoglires</taxon>
        <taxon>Glires</taxon>
        <taxon>Rodentia</taxon>
        <taxon>Myomorpha</taxon>
        <taxon>Muroidea</taxon>
        <taxon>Muridae</taxon>
        <taxon>Murinae</taxon>
        <taxon>Mus</taxon>
        <taxon>Mus</taxon>
    </lineage>
</organism>
<gene>
    <name evidence="15 18" type="primary">Igtp</name>
    <name evidence="16" type="synonym">Irgm3</name>
</gene>
<evidence type="ECO:0000250" key="1">
    <source>
        <dbReference type="UniProtKB" id="Q60766"/>
    </source>
</evidence>
<evidence type="ECO:0000250" key="2">
    <source>
        <dbReference type="UniProtKB" id="Q9QZ85"/>
    </source>
</evidence>
<evidence type="ECO:0000255" key="3">
    <source>
        <dbReference type="PROSITE-ProRule" id="PRU01053"/>
    </source>
</evidence>
<evidence type="ECO:0000269" key="4">
    <source>
    </source>
</evidence>
<evidence type="ECO:0000269" key="5">
    <source>
    </source>
</evidence>
<evidence type="ECO:0000269" key="6">
    <source>
    </source>
</evidence>
<evidence type="ECO:0000269" key="7">
    <source>
    </source>
</evidence>
<evidence type="ECO:0000269" key="8">
    <source>
    </source>
</evidence>
<evidence type="ECO:0000269" key="9">
    <source>
    </source>
</evidence>
<evidence type="ECO:0000269" key="10">
    <source>
    </source>
</evidence>
<evidence type="ECO:0000269" key="11">
    <source>
    </source>
</evidence>
<evidence type="ECO:0000269" key="12">
    <source>
    </source>
</evidence>
<evidence type="ECO:0000269" key="13">
    <source>
    </source>
</evidence>
<evidence type="ECO:0000269" key="14">
    <source>
    </source>
</evidence>
<evidence type="ECO:0000303" key="15">
    <source>
    </source>
</evidence>
<evidence type="ECO:0000303" key="16">
    <source>
    </source>
</evidence>
<evidence type="ECO:0000305" key="17"/>
<evidence type="ECO:0000312" key="18">
    <source>
        <dbReference type="MGI" id="MGI:107729"/>
    </source>
</evidence>
<dbReference type="EC" id="3.6.5.-" evidence="14"/>
<dbReference type="EMBL" id="AK002843">
    <property type="protein sequence ID" value="BAB22400.1"/>
    <property type="molecule type" value="mRNA"/>
</dbReference>
<dbReference type="EMBL" id="AK088315">
    <property type="protein sequence ID" value="BAC40277.1"/>
    <property type="molecule type" value="mRNA"/>
</dbReference>
<dbReference type="EMBL" id="AK149817">
    <property type="protein sequence ID" value="BAE29102.1"/>
    <property type="molecule type" value="mRNA"/>
</dbReference>
<dbReference type="EMBL" id="AK151779">
    <property type="protein sequence ID" value="BAE30684.1"/>
    <property type="molecule type" value="mRNA"/>
</dbReference>
<dbReference type="EMBL" id="AK151860">
    <property type="protein sequence ID" value="BAE30749.1"/>
    <property type="molecule type" value="mRNA"/>
</dbReference>
<dbReference type="EMBL" id="AK152483">
    <property type="protein sequence ID" value="BAE31255.1"/>
    <property type="molecule type" value="mRNA"/>
</dbReference>
<dbReference type="EMBL" id="AK169307">
    <property type="protein sequence ID" value="BAE41062.1"/>
    <property type="molecule type" value="mRNA"/>
</dbReference>
<dbReference type="EMBL" id="AL928857">
    <property type="status" value="NOT_ANNOTATED_CDS"/>
    <property type="molecule type" value="Genomic_DNA"/>
</dbReference>
<dbReference type="EMBL" id="BC132557">
    <property type="protein sequence ID" value="AAI32558.1"/>
    <property type="molecule type" value="mRNA"/>
</dbReference>
<dbReference type="EMBL" id="BC138607">
    <property type="protein sequence ID" value="AAI38608.1"/>
    <property type="molecule type" value="mRNA"/>
</dbReference>
<dbReference type="EMBL" id="FR734032">
    <property type="protein sequence ID" value="CBY65995.1"/>
    <property type="status" value="ALT_SEQ"/>
    <property type="molecule type" value="Genomic_DNA"/>
</dbReference>
<dbReference type="CCDS" id="CCDS24725.1"/>
<dbReference type="RefSeq" id="NP_061208.3">
    <property type="nucleotide sequence ID" value="NM_018738.4"/>
</dbReference>
<dbReference type="SMR" id="Q9DCE9"/>
<dbReference type="FunCoup" id="Q9DCE9">
    <property type="interactions" value="20"/>
</dbReference>
<dbReference type="STRING" id="10090.ENSMUSP00000047356"/>
<dbReference type="iPTMnet" id="Q9DCE9"/>
<dbReference type="PhosphoSitePlus" id="Q9DCE9"/>
<dbReference type="jPOST" id="Q9DCE9"/>
<dbReference type="PaxDb" id="10090-ENSMUSP00000047356"/>
<dbReference type="ProteomicsDB" id="334432"/>
<dbReference type="DNASU" id="16145"/>
<dbReference type="Ensembl" id="ENSMUST00000035266.11">
    <property type="protein sequence ID" value="ENSMUSP00000047356.5"/>
    <property type="gene ID" value="ENSMUSG00000078853.9"/>
</dbReference>
<dbReference type="GeneID" id="16145"/>
<dbReference type="KEGG" id="mmu:16145"/>
<dbReference type="UCSC" id="uc007jas.2">
    <property type="organism name" value="mouse"/>
</dbReference>
<dbReference type="AGR" id="MGI:107729"/>
<dbReference type="CTD" id="16145"/>
<dbReference type="MGI" id="MGI:107729">
    <property type="gene designation" value="Igtp"/>
</dbReference>
<dbReference type="VEuPathDB" id="HostDB:ENSMUSG00000078853"/>
<dbReference type="eggNOG" id="ENOG502QS9R">
    <property type="taxonomic scope" value="Eukaryota"/>
</dbReference>
<dbReference type="GeneTree" id="ENSGT00950000183007"/>
<dbReference type="HOGENOM" id="CLU_015342_3_0_1"/>
<dbReference type="InParanoid" id="Q9DCE9"/>
<dbReference type="OMA" id="NFRIACQ"/>
<dbReference type="OrthoDB" id="422720at2759"/>
<dbReference type="TreeFam" id="TF331897"/>
<dbReference type="BioGRID-ORCS" id="16145">
    <property type="hits" value="3 hits in 77 CRISPR screens"/>
</dbReference>
<dbReference type="ChiTaRS" id="Igtp">
    <property type="organism name" value="mouse"/>
</dbReference>
<dbReference type="PRO" id="PR:Q9DCE9"/>
<dbReference type="Proteomes" id="UP000000589">
    <property type="component" value="Chromosome 11"/>
</dbReference>
<dbReference type="RNAct" id="Q9DCE9">
    <property type="molecule type" value="protein"/>
</dbReference>
<dbReference type="Bgee" id="ENSMUSG00000078853">
    <property type="expression patterns" value="Expressed in small intestine Peyer's patch and 213 other cell types or tissues"/>
</dbReference>
<dbReference type="ExpressionAtlas" id="Q9DCE9">
    <property type="expression patterns" value="baseline and differential"/>
</dbReference>
<dbReference type="GO" id="GO:0030659">
    <property type="term" value="C:cytoplasmic vesicle membrane"/>
    <property type="evidence" value="ECO:0007669"/>
    <property type="project" value="UniProtKB-SubCell"/>
</dbReference>
<dbReference type="GO" id="GO:0005829">
    <property type="term" value="C:cytosol"/>
    <property type="evidence" value="ECO:0000314"/>
    <property type="project" value="MGI"/>
</dbReference>
<dbReference type="GO" id="GO:0005783">
    <property type="term" value="C:endoplasmic reticulum"/>
    <property type="evidence" value="ECO:0000314"/>
    <property type="project" value="UniProtKB"/>
</dbReference>
<dbReference type="GO" id="GO:0005811">
    <property type="term" value="C:lipid droplet"/>
    <property type="evidence" value="ECO:0007669"/>
    <property type="project" value="UniProtKB-SubCell"/>
</dbReference>
<dbReference type="GO" id="GO:0005525">
    <property type="term" value="F:GTP binding"/>
    <property type="evidence" value="ECO:0007669"/>
    <property type="project" value="UniProtKB-KW"/>
</dbReference>
<dbReference type="GO" id="GO:0003924">
    <property type="term" value="F:GTPase activity"/>
    <property type="evidence" value="ECO:0000314"/>
    <property type="project" value="UniProtKB"/>
</dbReference>
<dbReference type="GO" id="GO:0006914">
    <property type="term" value="P:autophagy"/>
    <property type="evidence" value="ECO:0007669"/>
    <property type="project" value="UniProtKB-KW"/>
</dbReference>
<dbReference type="GO" id="GO:0043374">
    <property type="term" value="P:CD8-positive, alpha-beta T cell differentiation"/>
    <property type="evidence" value="ECO:0000314"/>
    <property type="project" value="UniProtKB"/>
</dbReference>
<dbReference type="GO" id="GO:0035458">
    <property type="term" value="P:cellular response to interferon-beta"/>
    <property type="evidence" value="ECO:0000314"/>
    <property type="project" value="MGI"/>
</dbReference>
<dbReference type="GO" id="GO:0071346">
    <property type="term" value="P:cellular response to type II interferon"/>
    <property type="evidence" value="ECO:0000314"/>
    <property type="project" value="UniProtKB"/>
</dbReference>
<dbReference type="GO" id="GO:0051715">
    <property type="term" value="P:cytolysis in another organism"/>
    <property type="evidence" value="ECO:0000314"/>
    <property type="project" value="UniProtKB"/>
</dbReference>
<dbReference type="GO" id="GO:0042832">
    <property type="term" value="P:defense response to protozoan"/>
    <property type="evidence" value="ECO:0000314"/>
    <property type="project" value="UniProtKB"/>
</dbReference>
<dbReference type="GO" id="GO:0045087">
    <property type="term" value="P:innate immune response"/>
    <property type="evidence" value="ECO:0000315"/>
    <property type="project" value="UniProtKB"/>
</dbReference>
<dbReference type="GO" id="GO:1903898">
    <property type="term" value="P:negative regulation of PERK-mediated unfolded protein response"/>
    <property type="evidence" value="ECO:0000314"/>
    <property type="project" value="UniProtKB"/>
</dbReference>
<dbReference type="GO" id="GO:1901098">
    <property type="term" value="P:positive regulation of autophagosome maturation"/>
    <property type="evidence" value="ECO:0000314"/>
    <property type="project" value="UniProtKB"/>
</dbReference>
<dbReference type="CDD" id="cd04104">
    <property type="entry name" value="p47_IIGP_like"/>
    <property type="match status" value="1"/>
</dbReference>
<dbReference type="FunFam" id="3.40.50.300:FF:000541">
    <property type="entry name" value="Immunity related GTPase M"/>
    <property type="match status" value="1"/>
</dbReference>
<dbReference type="Gene3D" id="3.40.50.300">
    <property type="entry name" value="P-loop containing nucleotide triphosphate hydrolases"/>
    <property type="match status" value="1"/>
</dbReference>
<dbReference type="InterPro" id="IPR030385">
    <property type="entry name" value="G_IRG_dom"/>
</dbReference>
<dbReference type="InterPro" id="IPR007743">
    <property type="entry name" value="Immunity-related_GTPase-like"/>
</dbReference>
<dbReference type="InterPro" id="IPR051515">
    <property type="entry name" value="IRG"/>
</dbReference>
<dbReference type="InterPro" id="IPR027417">
    <property type="entry name" value="P-loop_NTPase"/>
</dbReference>
<dbReference type="PANTHER" id="PTHR32341:SF6">
    <property type="entry name" value="IMMUNITY-RELATED GTPASE FAMILY M PROTEIN 2-RELATED"/>
    <property type="match status" value="1"/>
</dbReference>
<dbReference type="PANTHER" id="PTHR32341">
    <property type="entry name" value="INTERFERON-INDUCIBLE GTPASE"/>
    <property type="match status" value="1"/>
</dbReference>
<dbReference type="Pfam" id="PF05049">
    <property type="entry name" value="IIGP"/>
    <property type="match status" value="1"/>
</dbReference>
<dbReference type="SUPFAM" id="SSF52540">
    <property type="entry name" value="P-loop containing nucleoside triphosphate hydrolases"/>
    <property type="match status" value="1"/>
</dbReference>
<dbReference type="PROSITE" id="PS51716">
    <property type="entry name" value="G_IRG"/>
    <property type="match status" value="1"/>
</dbReference>